<accession>Q2RFS1</accession>
<sequence>MAKEDVIEVEGKVIEPLPNAMFRVELANGHRVLAHVSGKIRMNFIRILPGDRVTVELSPYDLNRGRIVYRYK</sequence>
<organism>
    <name type="scientific">Moorella thermoacetica (strain ATCC 39073 / JCM 9320)</name>
    <dbReference type="NCBI Taxonomy" id="264732"/>
    <lineage>
        <taxon>Bacteria</taxon>
        <taxon>Bacillati</taxon>
        <taxon>Bacillota</taxon>
        <taxon>Clostridia</taxon>
        <taxon>Moorellales</taxon>
        <taxon>Moorellaceae</taxon>
        <taxon>Moorella</taxon>
    </lineage>
</organism>
<reference key="1">
    <citation type="journal article" date="2008" name="Environ. Microbiol.">
        <title>The complete genome sequence of Moorella thermoacetica (f. Clostridium thermoaceticum).</title>
        <authorList>
            <person name="Pierce E."/>
            <person name="Xie G."/>
            <person name="Barabote R.D."/>
            <person name="Saunders E."/>
            <person name="Han C.S."/>
            <person name="Detter J.C."/>
            <person name="Richardson P."/>
            <person name="Brettin T.S."/>
            <person name="Das A."/>
            <person name="Ljungdahl L.G."/>
            <person name="Ragsdale S.W."/>
        </authorList>
    </citation>
    <scope>NUCLEOTIDE SEQUENCE [LARGE SCALE GENOMIC DNA]</scope>
    <source>
        <strain>ATCC 39073 / JCM 9320</strain>
    </source>
</reference>
<keyword id="KW-0963">Cytoplasm</keyword>
<keyword id="KW-0396">Initiation factor</keyword>
<keyword id="KW-0648">Protein biosynthesis</keyword>
<keyword id="KW-0694">RNA-binding</keyword>
<keyword id="KW-0699">rRNA-binding</keyword>
<gene>
    <name evidence="1" type="primary">infA</name>
    <name type="ordered locus">Moth_2436</name>
</gene>
<proteinExistence type="inferred from homology"/>
<feature type="chain" id="PRO_0000263821" description="Translation initiation factor IF-1">
    <location>
        <begin position="1"/>
        <end position="72"/>
    </location>
</feature>
<feature type="domain" description="S1-like" evidence="1">
    <location>
        <begin position="1"/>
        <end position="72"/>
    </location>
</feature>
<dbReference type="EMBL" id="CP000232">
    <property type="protein sequence ID" value="ABC20718.1"/>
    <property type="molecule type" value="Genomic_DNA"/>
</dbReference>
<dbReference type="RefSeq" id="YP_431261.1">
    <property type="nucleotide sequence ID" value="NC_007644.1"/>
</dbReference>
<dbReference type="SMR" id="Q2RFS1"/>
<dbReference type="STRING" id="264732.Moth_2436"/>
<dbReference type="EnsemblBacteria" id="ABC20718">
    <property type="protein sequence ID" value="ABC20718"/>
    <property type="gene ID" value="Moth_2436"/>
</dbReference>
<dbReference type="KEGG" id="mta:Moth_2436"/>
<dbReference type="PATRIC" id="fig|264732.11.peg.2654"/>
<dbReference type="eggNOG" id="COG0361">
    <property type="taxonomic scope" value="Bacteria"/>
</dbReference>
<dbReference type="HOGENOM" id="CLU_151267_1_0_9"/>
<dbReference type="OrthoDB" id="9803250at2"/>
<dbReference type="GO" id="GO:0005829">
    <property type="term" value="C:cytosol"/>
    <property type="evidence" value="ECO:0007669"/>
    <property type="project" value="TreeGrafter"/>
</dbReference>
<dbReference type="GO" id="GO:0043022">
    <property type="term" value="F:ribosome binding"/>
    <property type="evidence" value="ECO:0007669"/>
    <property type="project" value="UniProtKB-UniRule"/>
</dbReference>
<dbReference type="GO" id="GO:0019843">
    <property type="term" value="F:rRNA binding"/>
    <property type="evidence" value="ECO:0007669"/>
    <property type="project" value="UniProtKB-UniRule"/>
</dbReference>
<dbReference type="GO" id="GO:0003743">
    <property type="term" value="F:translation initiation factor activity"/>
    <property type="evidence" value="ECO:0007669"/>
    <property type="project" value="UniProtKB-UniRule"/>
</dbReference>
<dbReference type="CDD" id="cd04451">
    <property type="entry name" value="S1_IF1"/>
    <property type="match status" value="1"/>
</dbReference>
<dbReference type="FunFam" id="2.40.50.140:FF:000002">
    <property type="entry name" value="Translation initiation factor IF-1"/>
    <property type="match status" value="1"/>
</dbReference>
<dbReference type="Gene3D" id="2.40.50.140">
    <property type="entry name" value="Nucleic acid-binding proteins"/>
    <property type="match status" value="1"/>
</dbReference>
<dbReference type="HAMAP" id="MF_00075">
    <property type="entry name" value="IF_1"/>
    <property type="match status" value="1"/>
</dbReference>
<dbReference type="InterPro" id="IPR012340">
    <property type="entry name" value="NA-bd_OB-fold"/>
</dbReference>
<dbReference type="InterPro" id="IPR006196">
    <property type="entry name" value="RNA-binding_domain_S1_IF1"/>
</dbReference>
<dbReference type="InterPro" id="IPR003029">
    <property type="entry name" value="S1_domain"/>
</dbReference>
<dbReference type="InterPro" id="IPR004368">
    <property type="entry name" value="TIF_IF1"/>
</dbReference>
<dbReference type="NCBIfam" id="TIGR00008">
    <property type="entry name" value="infA"/>
    <property type="match status" value="1"/>
</dbReference>
<dbReference type="PANTHER" id="PTHR33370">
    <property type="entry name" value="TRANSLATION INITIATION FACTOR IF-1, CHLOROPLASTIC"/>
    <property type="match status" value="1"/>
</dbReference>
<dbReference type="PANTHER" id="PTHR33370:SF1">
    <property type="entry name" value="TRANSLATION INITIATION FACTOR IF-1, CHLOROPLASTIC"/>
    <property type="match status" value="1"/>
</dbReference>
<dbReference type="Pfam" id="PF01176">
    <property type="entry name" value="eIF-1a"/>
    <property type="match status" value="1"/>
</dbReference>
<dbReference type="SMART" id="SM00316">
    <property type="entry name" value="S1"/>
    <property type="match status" value="1"/>
</dbReference>
<dbReference type="SUPFAM" id="SSF50249">
    <property type="entry name" value="Nucleic acid-binding proteins"/>
    <property type="match status" value="1"/>
</dbReference>
<dbReference type="PROSITE" id="PS50832">
    <property type="entry name" value="S1_IF1_TYPE"/>
    <property type="match status" value="1"/>
</dbReference>
<evidence type="ECO:0000255" key="1">
    <source>
        <dbReference type="HAMAP-Rule" id="MF_00075"/>
    </source>
</evidence>
<protein>
    <recommendedName>
        <fullName evidence="1">Translation initiation factor IF-1</fullName>
    </recommendedName>
</protein>
<name>IF1_MOOTA</name>
<comment type="function">
    <text evidence="1">One of the essential components for the initiation of protein synthesis. Stabilizes the binding of IF-2 and IF-3 on the 30S subunit to which N-formylmethionyl-tRNA(fMet) subsequently binds. Helps modulate mRNA selection, yielding the 30S pre-initiation complex (PIC). Upon addition of the 50S ribosomal subunit IF-1, IF-2 and IF-3 are released leaving the mature 70S translation initiation complex.</text>
</comment>
<comment type="subunit">
    <text evidence="1">Component of the 30S ribosomal translation pre-initiation complex which assembles on the 30S ribosome in the order IF-2 and IF-3, IF-1 and N-formylmethionyl-tRNA(fMet); mRNA recruitment can occur at any time during PIC assembly.</text>
</comment>
<comment type="subcellular location">
    <subcellularLocation>
        <location evidence="1">Cytoplasm</location>
    </subcellularLocation>
</comment>
<comment type="similarity">
    <text evidence="1">Belongs to the IF-1 family.</text>
</comment>